<feature type="chain" id="PRO_0000402682" description="Ureidoacrylate amidohydrolase RutB">
    <location>
        <begin position="1"/>
        <end position="230"/>
    </location>
</feature>
<feature type="active site" description="Proton acceptor" evidence="1">
    <location>
        <position position="24"/>
    </location>
</feature>
<feature type="active site" evidence="1">
    <location>
        <position position="133"/>
    </location>
</feature>
<feature type="active site" description="Nucleophile" evidence="1">
    <location>
        <position position="166"/>
    </location>
</feature>
<proteinExistence type="inferred from homology"/>
<sequence length="230" mass="25237">MTTLTARPEAITFDPQQSALIVVDMQNAYATPGGYLDLAGFDVSTTRPVIANIQTAVTAARAAGMLIIWFQNGWDEQYVEAGGPGSPNFHKSNALKTMRNQPQLQGKLLAKGSWDYQLVDELMPQPGDIVLPKPRYSGFFNTPLDSILRSRGIRHLVFTGIATNVCVESTLRDGFFLEYFGVVLEDATHQAGPEFAQKAALFNIETFFGWVSDVETFCDALSSTSFARIA</sequence>
<evidence type="ECO:0000255" key="1">
    <source>
        <dbReference type="HAMAP-Rule" id="MF_00830"/>
    </source>
</evidence>
<keyword id="KW-0378">Hydrolase</keyword>
<reference key="1">
    <citation type="journal article" date="2006" name="Mol. Microbiol.">
        <title>Role of pathogenicity island-associated integrases in the genome plasticity of uropathogenic Escherichia coli strain 536.</title>
        <authorList>
            <person name="Hochhut B."/>
            <person name="Wilde C."/>
            <person name="Balling G."/>
            <person name="Middendorf B."/>
            <person name="Dobrindt U."/>
            <person name="Brzuszkiewicz E."/>
            <person name="Gottschalk G."/>
            <person name="Carniel E."/>
            <person name="Hacker J."/>
        </authorList>
    </citation>
    <scope>NUCLEOTIDE SEQUENCE [LARGE SCALE GENOMIC DNA]</scope>
    <source>
        <strain>536 / UPEC</strain>
    </source>
</reference>
<dbReference type="EC" id="3.5.1.110" evidence="1"/>
<dbReference type="EMBL" id="CP000247">
    <property type="protein sequence ID" value="ABG69023.1"/>
    <property type="molecule type" value="Genomic_DNA"/>
</dbReference>
<dbReference type="RefSeq" id="WP_011579106.1">
    <property type="nucleotide sequence ID" value="NC_008253.1"/>
</dbReference>
<dbReference type="SMR" id="Q0TJ56"/>
<dbReference type="KEGG" id="ecp:ECP_1010"/>
<dbReference type="HOGENOM" id="CLU_068979_8_0_6"/>
<dbReference type="Proteomes" id="UP000009182">
    <property type="component" value="Chromosome"/>
</dbReference>
<dbReference type="GO" id="GO:0016811">
    <property type="term" value="F:hydrolase activity, acting on carbon-nitrogen (but not peptide) bonds, in linear amides"/>
    <property type="evidence" value="ECO:0007669"/>
    <property type="project" value="UniProtKB-UniRule"/>
</dbReference>
<dbReference type="GO" id="GO:0019740">
    <property type="term" value="P:nitrogen utilization"/>
    <property type="evidence" value="ECO:0007669"/>
    <property type="project" value="UniProtKB-UniRule"/>
</dbReference>
<dbReference type="GO" id="GO:0006212">
    <property type="term" value="P:uracil catabolic process"/>
    <property type="evidence" value="ECO:0007669"/>
    <property type="project" value="UniProtKB-UniRule"/>
</dbReference>
<dbReference type="CDD" id="cd00431">
    <property type="entry name" value="cysteine_hydrolases"/>
    <property type="match status" value="1"/>
</dbReference>
<dbReference type="FunFam" id="3.40.50.850:FF:000004">
    <property type="entry name" value="Peroxyureidoacrylate/ureidoacrylate amidohydrolase RutB"/>
    <property type="match status" value="1"/>
</dbReference>
<dbReference type="Gene3D" id="3.40.50.850">
    <property type="entry name" value="Isochorismatase-like"/>
    <property type="match status" value="1"/>
</dbReference>
<dbReference type="HAMAP" id="MF_00830">
    <property type="entry name" value="RutB"/>
    <property type="match status" value="1"/>
</dbReference>
<dbReference type="InterPro" id="IPR000868">
    <property type="entry name" value="Isochorismatase-like_dom"/>
</dbReference>
<dbReference type="InterPro" id="IPR050272">
    <property type="entry name" value="Isochorismatase-like_hydrls"/>
</dbReference>
<dbReference type="InterPro" id="IPR036380">
    <property type="entry name" value="Isochorismatase-like_sf"/>
</dbReference>
<dbReference type="InterPro" id="IPR019916">
    <property type="entry name" value="RutB"/>
</dbReference>
<dbReference type="NCBIfam" id="TIGR03614">
    <property type="entry name" value="RutB"/>
    <property type="match status" value="1"/>
</dbReference>
<dbReference type="PANTHER" id="PTHR43540:SF6">
    <property type="entry name" value="ISOCHORISMATASE-LIKE DOMAIN-CONTAINING PROTEIN"/>
    <property type="match status" value="1"/>
</dbReference>
<dbReference type="PANTHER" id="PTHR43540">
    <property type="entry name" value="PEROXYUREIDOACRYLATE/UREIDOACRYLATE AMIDOHYDROLASE-RELATED"/>
    <property type="match status" value="1"/>
</dbReference>
<dbReference type="Pfam" id="PF00857">
    <property type="entry name" value="Isochorismatase"/>
    <property type="match status" value="1"/>
</dbReference>
<dbReference type="SUPFAM" id="SSF52499">
    <property type="entry name" value="Isochorismatase-like hydrolases"/>
    <property type="match status" value="1"/>
</dbReference>
<name>RUTB_ECOL5</name>
<accession>Q0TJ56</accession>
<protein>
    <recommendedName>
        <fullName evidence="1">Ureidoacrylate amidohydrolase RutB</fullName>
        <ecNumber evidence="1">3.5.1.110</ecNumber>
    </recommendedName>
</protein>
<comment type="function">
    <text evidence="1">Hydrolyzes ureidoacrylate to form aminoacrylate and carbamate. The carbamate hydrolyzes spontaneously, thereby releasing one of the nitrogen atoms of the pyrimidine ring as ammonia and one of its carbon atoms as CO2.</text>
</comment>
<comment type="catalytic activity">
    <reaction evidence="1">
        <text>(Z)-3-ureidoacrylate + H2O + H(+) = (Z)-3-aminoacrylate + NH4(+) + CO2</text>
        <dbReference type="Rhea" id="RHEA:42624"/>
        <dbReference type="ChEBI" id="CHEBI:15377"/>
        <dbReference type="ChEBI" id="CHEBI:15378"/>
        <dbReference type="ChEBI" id="CHEBI:16526"/>
        <dbReference type="ChEBI" id="CHEBI:28938"/>
        <dbReference type="ChEBI" id="CHEBI:59891"/>
        <dbReference type="ChEBI" id="CHEBI:59894"/>
        <dbReference type="EC" id="3.5.1.110"/>
    </reaction>
</comment>
<comment type="catalytic activity">
    <reaction evidence="1">
        <text>(Z)-3-ureidoacrylate + H2O = (Z)-3-aminoacrylate + carbamate + H(+)</text>
        <dbReference type="Rhea" id="RHEA:31603"/>
        <dbReference type="ChEBI" id="CHEBI:13941"/>
        <dbReference type="ChEBI" id="CHEBI:15377"/>
        <dbReference type="ChEBI" id="CHEBI:15378"/>
        <dbReference type="ChEBI" id="CHEBI:59891"/>
        <dbReference type="ChEBI" id="CHEBI:59894"/>
    </reaction>
</comment>
<comment type="catalytic activity">
    <reaction evidence="1">
        <text>(Z)-2-methylureidoacrylate + H2O + H(+) = (Z)-2-methylaminoacrylate + NH4(+) + CO2</text>
        <dbReference type="Rhea" id="RHEA:42620"/>
        <dbReference type="ChEBI" id="CHEBI:15377"/>
        <dbReference type="ChEBI" id="CHEBI:15378"/>
        <dbReference type="ChEBI" id="CHEBI:16526"/>
        <dbReference type="ChEBI" id="CHEBI:28938"/>
        <dbReference type="ChEBI" id="CHEBI:143783"/>
        <dbReference type="ChEBI" id="CHEBI:145735"/>
        <dbReference type="EC" id="3.5.1.110"/>
    </reaction>
</comment>
<comment type="induction">
    <text evidence="1">Up-regulated by the nitrogen regulatory protein C (NtrC also called GlnG) and repressed by RutR.</text>
</comment>
<comment type="similarity">
    <text evidence="1">Belongs to the isochorismatase family. RutB subfamily.</text>
</comment>
<gene>
    <name evidence="1" type="primary">rutB</name>
    <name type="ordered locus">ECP_1010</name>
</gene>
<organism>
    <name type="scientific">Escherichia coli O6:K15:H31 (strain 536 / UPEC)</name>
    <dbReference type="NCBI Taxonomy" id="362663"/>
    <lineage>
        <taxon>Bacteria</taxon>
        <taxon>Pseudomonadati</taxon>
        <taxon>Pseudomonadota</taxon>
        <taxon>Gammaproteobacteria</taxon>
        <taxon>Enterobacterales</taxon>
        <taxon>Enterobacteriaceae</taxon>
        <taxon>Escherichia</taxon>
    </lineage>
</organism>